<feature type="signal peptide" evidence="20 21">
    <location>
        <begin position="1"/>
        <end position="19"/>
    </location>
</feature>
<feature type="chain" id="PRO_0000036394" description="Vitronectin">
    <location>
        <begin position="20"/>
        <end position="478"/>
    </location>
</feature>
<feature type="chain" id="PRO_0000036395" description="Vitronectin V65 subunit">
    <location>
        <begin position="20"/>
        <end position="398"/>
    </location>
</feature>
<feature type="peptide" id="PRO_0000036396" description="Somatomedin-B">
    <location>
        <begin position="20"/>
        <end position="63"/>
    </location>
</feature>
<feature type="chain" id="PRO_0000036397" description="Vitronectin V10 subunit">
    <location>
        <begin position="399"/>
        <end position="478"/>
    </location>
</feature>
<feature type="domain" description="SMB" evidence="3">
    <location>
        <begin position="20"/>
        <end position="63"/>
    </location>
</feature>
<feature type="repeat" description="Hemopexin 1">
    <location>
        <begin position="158"/>
        <end position="202"/>
    </location>
</feature>
<feature type="repeat" description="Hemopexin 2">
    <location>
        <begin position="203"/>
        <end position="250"/>
    </location>
</feature>
<feature type="repeat" description="Hemopexin 3">
    <location>
        <begin position="251"/>
        <end position="305"/>
    </location>
</feature>
<feature type="repeat" description="Hemopexin 4">
    <location>
        <begin position="419"/>
        <end position="472"/>
    </location>
</feature>
<feature type="region of interest" description="Disordered" evidence="4">
    <location>
        <begin position="91"/>
        <end position="158"/>
    </location>
</feature>
<feature type="region of interest" description="Heparin-binding">
    <location>
        <begin position="362"/>
        <end position="395"/>
    </location>
</feature>
<feature type="region of interest" description="Disordered" evidence="4">
    <location>
        <begin position="364"/>
        <end position="398"/>
    </location>
</feature>
<feature type="short sequence motif" description="Cell attachment site">
    <location>
        <begin position="64"/>
        <end position="66"/>
    </location>
</feature>
<feature type="compositionally biased region" description="Polar residues" evidence="4">
    <location>
        <begin position="97"/>
        <end position="112"/>
    </location>
</feature>
<feature type="compositionally biased region" description="Basic and acidic residues" evidence="4">
    <location>
        <begin position="133"/>
        <end position="143"/>
    </location>
</feature>
<feature type="compositionally biased region" description="Basic residues" evidence="4">
    <location>
        <begin position="365"/>
        <end position="388"/>
    </location>
</feature>
<feature type="site" description="Cleavage">
    <location>
        <begin position="398"/>
        <end position="399"/>
    </location>
</feature>
<feature type="modified residue" description="Phosphothreonine; by CK2; in vitro" evidence="23">
    <location>
        <position position="69"/>
    </location>
</feature>
<feature type="modified residue" description="Sulfotyrosine" evidence="13">
    <location>
        <position position="75"/>
    </location>
</feature>
<feature type="modified residue" description="Phosphothreonine; by CK2; in vitro" evidence="23">
    <location>
        <position position="76"/>
    </location>
</feature>
<feature type="modified residue" description="Sulfotyrosine" evidence="13">
    <location>
        <position position="78"/>
    </location>
</feature>
<feature type="modified residue" description="Phosphoserine" evidence="28">
    <location>
        <position position="130"/>
    </location>
</feature>
<feature type="modified residue" description="Phosphoserine" evidence="28">
    <location>
        <position position="137"/>
    </location>
</feature>
<feature type="modified residue" description="Sulfotyrosine" evidence="2">
    <location>
        <position position="282"/>
    </location>
</feature>
<feature type="modified residue" description="Phosphoserine" evidence="13 26 27 28">
    <location>
        <position position="312"/>
    </location>
</feature>
<feature type="modified residue" description="Phosphoserine; by PKA" evidence="10 16">
    <location>
        <position position="397"/>
    </location>
</feature>
<feature type="modified residue" description="Sulfotyrosine" evidence="2">
    <location>
        <position position="417"/>
    </location>
</feature>
<feature type="modified residue" description="Sulfotyrosine" evidence="2">
    <location>
        <position position="420"/>
    </location>
</feature>
<feature type="glycosylation site" description="N-linked (GlcNAc...) (complex) asparagine" evidence="7 9 13 14 15">
    <location>
        <position position="86"/>
    </location>
</feature>
<feature type="glycosylation site" description="N-linked (GlcNAc...) asparagine" evidence="7 9 15">
    <location>
        <position position="169"/>
    </location>
</feature>
<feature type="glycosylation site" description="N-linked (GlcNAc...) (complex) asparagine" evidence="7 9 14 15">
    <location>
        <position position="242"/>
    </location>
</feature>
<feature type="disulfide bond" evidence="3">
    <location>
        <begin position="24"/>
        <end position="40"/>
    </location>
</feature>
<feature type="disulfide bond" evidence="3 5">
    <location>
        <begin position="24"/>
        <end position="28"/>
    </location>
</feature>
<feature type="disulfide bond" evidence="3">
    <location>
        <begin position="28"/>
        <end position="58"/>
    </location>
</feature>
<feature type="disulfide bond" evidence="3">
    <location>
        <begin position="38"/>
        <end position="51"/>
    </location>
</feature>
<feature type="disulfide bond" evidence="3 5">
    <location>
        <begin position="38"/>
        <end position="40"/>
    </location>
</feature>
<feature type="disulfide bond" evidence="3 5">
    <location>
        <begin position="44"/>
        <end position="50"/>
    </location>
</feature>
<feature type="disulfide bond" evidence="3 5">
    <location>
        <begin position="51"/>
        <end position="58"/>
    </location>
</feature>
<feature type="disulfide bond" evidence="3 5">
    <location>
        <begin position="293"/>
        <end position="430"/>
    </location>
</feature>
<feature type="sequence variant" id="VAR_012983" description="In dbSNP:rs2227741." evidence="24">
    <original>A</original>
    <variation>S</variation>
    <location>
        <position position="122"/>
    </location>
</feature>
<feature type="sequence variant" id="VAR_012984" description="In dbSNP:rs2227723." evidence="24">
    <original>R</original>
    <variation>Q</variation>
    <location>
        <position position="268"/>
    </location>
</feature>
<feature type="sequence variant" id="VAR_012985" description="In dbSNP:rs704." evidence="8 24">
    <original>T</original>
    <variation>M</variation>
    <location>
        <position position="400"/>
    </location>
</feature>
<feature type="mutagenesis site" description="Abolishes phosphorylation by CK2 and inhibits adhesion and spreading; when associated with A-76." evidence="23">
    <original>T</original>
    <variation>A</variation>
    <location>
        <position position="69"/>
    </location>
</feature>
<feature type="mutagenesis site" description="Abolishes phosphorylation by CK2 and enhances adhesion and spreading; when associated with E-76." evidence="23">
    <original>T</original>
    <variation>E</variation>
    <location>
        <position position="69"/>
    </location>
</feature>
<feature type="mutagenesis site" description="Abolishes phosphorylation by CK2 and inhibits adhesion and spreading; when associated with A-69." evidence="23">
    <original>T</original>
    <variation>A</variation>
    <location>
        <position position="76"/>
    </location>
</feature>
<feature type="mutagenesis site" description="Abolishes phosphorylation by CK2 and enhances adhesion and spreading; when associated with E-69." evidence="23">
    <original>T</original>
    <variation>E</variation>
    <location>
        <position position="76"/>
    </location>
</feature>
<feature type="sequence conflict" description="In Ref. 8; AA sequence." evidence="25" ref="8">
    <original>C</original>
    <variation>N</variation>
    <location>
        <position position="50"/>
    </location>
</feature>
<feature type="sequence conflict" description="In Ref. 3 and 4." evidence="25" ref="3 4">
    <original>S</original>
    <variation>N</variation>
    <location>
        <position position="225"/>
    </location>
</feature>
<feature type="sequence conflict" description="In Ref. 3; CAA26933." evidence="25" ref="3">
    <original>A</original>
    <variation>T</variation>
    <location>
        <position position="366"/>
    </location>
</feature>
<feature type="strand" evidence="30">
    <location>
        <begin position="22"/>
        <end position="24"/>
    </location>
</feature>
<feature type="turn" evidence="31">
    <location>
        <begin position="25"/>
        <end position="29"/>
    </location>
</feature>
<feature type="strand" evidence="30">
    <location>
        <begin position="32"/>
        <end position="34"/>
    </location>
</feature>
<feature type="strand" evidence="29">
    <location>
        <begin position="36"/>
        <end position="39"/>
    </location>
</feature>
<feature type="helix" evidence="29">
    <location>
        <begin position="44"/>
        <end position="47"/>
    </location>
</feature>
<feature type="turn" evidence="30">
    <location>
        <begin position="51"/>
        <end position="53"/>
    </location>
</feature>
<feature type="helix" evidence="29">
    <location>
        <begin position="54"/>
        <end position="57"/>
    </location>
</feature>
<feature type="strand" evidence="30">
    <location>
        <begin position="65"/>
        <end position="68"/>
    </location>
</feature>
<feature type="strand" evidence="33">
    <location>
        <begin position="162"/>
        <end position="164"/>
    </location>
</feature>
<feature type="strand" evidence="33">
    <location>
        <begin position="171"/>
        <end position="176"/>
    </location>
</feature>
<feature type="strand" evidence="33">
    <location>
        <begin position="179"/>
        <end position="183"/>
    </location>
</feature>
<feature type="strand" evidence="32">
    <location>
        <begin position="193"/>
        <end position="195"/>
    </location>
</feature>
<feature type="helix" evidence="33">
    <location>
        <begin position="196"/>
        <end position="199"/>
    </location>
</feature>
<feature type="strand" evidence="33">
    <location>
        <begin position="208"/>
        <end position="211"/>
    </location>
</feature>
<feature type="strand" evidence="33">
    <location>
        <begin position="214"/>
        <end position="216"/>
    </location>
</feature>
<feature type="strand" evidence="33">
    <location>
        <begin position="219"/>
        <end position="223"/>
    </location>
</feature>
<feature type="strand" evidence="33">
    <location>
        <begin position="226"/>
        <end position="231"/>
    </location>
</feature>
<feature type="strand" evidence="33">
    <location>
        <begin position="240"/>
        <end position="242"/>
    </location>
</feature>
<feature type="helix" evidence="33">
    <location>
        <begin position="243"/>
        <end position="246"/>
    </location>
</feature>
<feature type="strand" evidence="33">
    <location>
        <begin position="255"/>
        <end position="260"/>
    </location>
</feature>
<feature type="turn" evidence="33">
    <location>
        <begin position="264"/>
        <end position="266"/>
    </location>
</feature>
<feature type="strand" evidence="33">
    <location>
        <begin position="270"/>
        <end position="275"/>
    </location>
</feature>
<feature type="strand" evidence="33">
    <location>
        <begin position="278"/>
        <end position="283"/>
    </location>
</feature>
<feature type="helix" evidence="33">
    <location>
        <begin position="335"/>
        <end position="338"/>
    </location>
</feature>
<feature type="strand" evidence="33">
    <location>
        <begin position="347"/>
        <end position="351"/>
    </location>
</feature>
<feature type="strand" evidence="33">
    <location>
        <begin position="435"/>
        <end position="440"/>
    </location>
</feature>
<feature type="strand" evidence="33">
    <location>
        <begin position="443"/>
        <end position="448"/>
    </location>
</feature>
<feature type="turn" evidence="33">
    <location>
        <begin position="449"/>
        <end position="451"/>
    </location>
</feature>
<feature type="strand" evidence="33">
    <location>
        <begin position="461"/>
        <end position="464"/>
    </location>
</feature>
<feature type="helix" evidence="33">
    <location>
        <begin position="465"/>
        <end position="468"/>
    </location>
</feature>
<accession>P04004</accession>
<accession>B2R7G0</accession>
<accession>P01141</accession>
<accession>Q9BSH7</accession>
<sequence length="478" mass="54306">MAPLRPLLILALLAWVALADQESCKGRCTEGFNVDKKCQCDELCSYYQSCCTDYTAECKPQVTRGDVFTMPEDEYTVYDDGEEKNNATVHEQVGGPSLTSDLQAQSKGNPEQTPVLKPEEEAPAPEVGASKPEGIDSRPETLHPGRPQPPAEEELCSGKPFDAFTDLKNGSLFAFRGQYCYELDEKAVRPGYPKLIRDVWGIEGPIDAAFTRINCQGKTYLFKGSQYWRFEDGVLDPDYPRNISDGFDGIPDNVDAALALPAHSYSGRERVYFFKGKQYWEYQFQHQPSQEECEGSSLSAVFEHFAMMQRDSWEDIFELLFWGRTSAGTRQPQFISRDWHGVPGQVDAAMAGRIYISGMAPRPSLAKKQRFRHRNRKGYRSQRGHSRGRNQNSRRPSRATWLSLFSSEESNLGANNYDDYRMDWLVPATCEPIQSVFFFSGDKYYRVNLRTRRVDTVDPPYPRSIAQYWLGCPAPGHL</sequence>
<evidence type="ECO:0000250" key="1"/>
<evidence type="ECO:0000255" key="2"/>
<evidence type="ECO:0000255" key="3">
    <source>
        <dbReference type="PROSITE-ProRule" id="PRU00350"/>
    </source>
</evidence>
<evidence type="ECO:0000256" key="4">
    <source>
        <dbReference type="SAM" id="MobiDB-lite"/>
    </source>
</evidence>
<evidence type="ECO:0000269" key="5">
    <source>
    </source>
</evidence>
<evidence type="ECO:0000269" key="6">
    <source>
    </source>
</evidence>
<evidence type="ECO:0000269" key="7">
    <source>
    </source>
</evidence>
<evidence type="ECO:0000269" key="8">
    <source>
    </source>
</evidence>
<evidence type="ECO:0000269" key="9">
    <source>
    </source>
</evidence>
<evidence type="ECO:0000269" key="10">
    <source>
    </source>
</evidence>
<evidence type="ECO:0000269" key="11">
    <source>
    </source>
</evidence>
<evidence type="ECO:0000269" key="12">
    <source>
    </source>
</evidence>
<evidence type="ECO:0000269" key="13">
    <source>
    </source>
</evidence>
<evidence type="ECO:0000269" key="14">
    <source>
    </source>
</evidence>
<evidence type="ECO:0000269" key="15">
    <source>
    </source>
</evidence>
<evidence type="ECO:0000269" key="16">
    <source>
    </source>
</evidence>
<evidence type="ECO:0000269" key="17">
    <source>
    </source>
</evidence>
<evidence type="ECO:0000269" key="18">
    <source>
    </source>
</evidence>
<evidence type="ECO:0000269" key="19">
    <source>
    </source>
</evidence>
<evidence type="ECO:0000269" key="20">
    <source>
    </source>
</evidence>
<evidence type="ECO:0000269" key="21">
    <source>
    </source>
</evidence>
<evidence type="ECO:0000269" key="22">
    <source>
    </source>
</evidence>
<evidence type="ECO:0000269" key="23">
    <source>
    </source>
</evidence>
<evidence type="ECO:0000269" key="24">
    <source ref="6"/>
</evidence>
<evidence type="ECO:0000305" key="25"/>
<evidence type="ECO:0007744" key="26">
    <source>
    </source>
</evidence>
<evidence type="ECO:0007744" key="27">
    <source>
    </source>
</evidence>
<evidence type="ECO:0007744" key="28">
    <source>
    </source>
</evidence>
<evidence type="ECO:0007829" key="29">
    <source>
        <dbReference type="PDB" id="1OC0"/>
    </source>
</evidence>
<evidence type="ECO:0007829" key="30">
    <source>
        <dbReference type="PDB" id="1S4G"/>
    </source>
</evidence>
<evidence type="ECO:0007829" key="31">
    <source>
        <dbReference type="PDB" id="1SSU"/>
    </source>
</evidence>
<evidence type="ECO:0007829" key="32">
    <source>
        <dbReference type="PDB" id="6O5E"/>
    </source>
</evidence>
<evidence type="ECO:0007829" key="33">
    <source>
        <dbReference type="PDB" id="7RJ9"/>
    </source>
</evidence>
<comment type="function">
    <text>Vitronectin is a cell adhesion and spreading factor found in serum and tissues. Vitronectin interact with glycosaminoglycans and proteoglycans. Is recognized by certain members of the integrin family and serves as a cell-to-substrate adhesion molecule. Inhibitor of the membrane-damaging effect of the terminal cytolytic complement pathway.</text>
</comment>
<comment type="function">
    <text>Somatomedin-B is a growth hormone-dependent serum factor with protease-inhibiting activity.</text>
</comment>
<comment type="subunit">
    <text evidence="6 11 12 21 22">Exists in two forms: a single chain 75 kDa form (V75) and a clipped form composed of two chains (65 kDa and 10 kDa) (V65+V10) which are held together by a disulfide bond. Interacts with SERPINE1/PAI1, insulin and C1QBP.</text>
</comment>
<comment type="subunit">
    <text evidence="19">(Microbial infection) Interacts (via hemopexin repeat 2) with P.falciparum (isolate CDC / Honduras) SERA5 P47 (via C-terminus); may form heterotetramers of two VTN and SERA5 P47 heterodimers; the interaction may protect merozoites from phagocytosis by host monocytes; VTN glycosylation appears to be dispensable for the interaction.</text>
</comment>
<comment type="interaction">
    <interactant intactId="EBI-1036653">
        <id>P04004</id>
    </interactant>
    <interactant intactId="EBI-347528">
        <id>Q07021</id>
        <label>C1QBP</label>
    </interactant>
    <organismsDiffer>false</organismsDiffer>
    <experiments>10</experiments>
</comment>
<comment type="interaction">
    <interactant intactId="EBI-1036653">
        <id>P04004</id>
    </interactant>
    <interactant intactId="EBI-80426">
        <id>Q15700</id>
        <label>DLG2</label>
    </interactant>
    <organismsDiffer>false</organismsDiffer>
    <experiments>3</experiments>
</comment>
<comment type="interaction">
    <interactant intactId="EBI-1036653">
        <id>P04004</id>
    </interactant>
    <interactant intactId="EBI-80440">
        <id>Q92796</id>
        <label>DLG3</label>
    </interactant>
    <organismsDiffer>false</organismsDiffer>
    <experiments>3</experiments>
</comment>
<comment type="interaction">
    <interactant intactId="EBI-1036653">
        <id>P04004</id>
    </interactant>
    <interactant intactId="EBI-349832">
        <id>Q9HD26</id>
        <label>GOPC</label>
    </interactant>
    <organismsDiffer>false</organismsDiffer>
    <experiments>4</experiments>
</comment>
<comment type="interaction">
    <interactant intactId="EBI-1036653">
        <id>P04004</id>
    </interactant>
    <interactant intactId="EBI-11102276">
        <id>Q9HD26-2</id>
        <label>GOPC</label>
    </interactant>
    <organismsDiffer>false</organismsDiffer>
    <experiments>3</experiments>
</comment>
<comment type="interaction">
    <interactant intactId="EBI-1036653">
        <id>P04004</id>
    </interactant>
    <interactant intactId="EBI-19763427">
        <id>Q9NSN8</id>
        <label>SNTG1</label>
    </interactant>
    <organismsDiffer>false</organismsDiffer>
    <experiments>3</experiments>
</comment>
<comment type="interaction">
    <interactant intactId="EBI-1036653">
        <id>P04004</id>
    </interactant>
    <interactant intactId="EBI-947187">
        <id>Q9UHD9</id>
        <label>UBQLN2</label>
    </interactant>
    <organismsDiffer>false</organismsDiffer>
    <experiments>3</experiments>
</comment>
<comment type="interaction">
    <interactant intactId="EBI-1036653">
        <id>P04004</id>
    </interactant>
    <interactant intactId="EBI-2259469">
        <id>P75358</id>
        <label>gapA</label>
    </interactant>
    <organismsDiffer>true</organismsDiffer>
    <experiments>3</experiments>
</comment>
<comment type="interaction">
    <interactant intactId="EBI-1036653">
        <id>P04004</id>
    </interactant>
    <interactant intactId="EBI-2259565">
        <id>P75167</id>
        <label>gpmI</label>
    </interactant>
    <organismsDiffer>true</organismsDiffer>
    <experiments>2</experiments>
</comment>
<comment type="interaction">
    <interactant intactId="EBI-1036653">
        <id>P04004</id>
    </interactant>
    <interactant intactId="EBI-2260877">
        <id>P78007</id>
        <label>ldh</label>
    </interactant>
    <organismsDiffer>true</organismsDiffer>
    <experiments>3</experiments>
</comment>
<comment type="interaction">
    <interactant intactId="EBI-1036653">
        <id>P04004</id>
    </interactant>
    <interactant intactId="EBI-12498321">
        <id>A0A024A2C9</id>
        <label>lph</label>
    </interactant>
    <organismsDiffer>true</organismsDiffer>
    <experiments>7</experiments>
</comment>
<comment type="interaction">
    <interactant intactId="EBI-1036653">
        <id>P04004</id>
    </interactant>
    <interactant intactId="EBI-2259629">
        <id>P75390</id>
        <label>pdhA</label>
    </interactant>
    <organismsDiffer>true</organismsDiffer>
    <experiments>3</experiments>
</comment>
<comment type="interaction">
    <interactant intactId="EBI-1036653">
        <id>P04004</id>
    </interactant>
    <interactant intactId="EBI-2259621">
        <id>P75391</id>
        <label>pdhB</label>
    </interactant>
    <organismsDiffer>true</organismsDiffer>
    <experiments>3</experiments>
</comment>
<comment type="interaction">
    <interactant intactId="EBI-1036653">
        <id>P04004</id>
    </interactant>
    <interactant intactId="EBI-2259473">
        <id>P78031</id>
        <label>pyk</label>
    </interactant>
    <organismsDiffer>true</organismsDiffer>
    <experiments>3</experiments>
</comment>
<comment type="interaction">
    <interactant intactId="EBI-1036653">
        <id>P04004</id>
    </interactant>
    <interactant intactId="EBI-12654979">
        <id>P75611</id>
        <label>tkt</label>
    </interactant>
    <organismsDiffer>true</organismsDiffer>
    <experiments>3</experiments>
</comment>
<comment type="interaction">
    <interactant intactId="EBI-1036653">
        <id>P04004</id>
    </interactant>
    <interactant intactId="EBI-12501515">
        <id>Q4KTX9</id>
    </interactant>
    <organismsDiffer>true</organismsDiffer>
    <experiments>12</experiments>
</comment>
<comment type="subcellular location">
    <subcellularLocation>
        <location evidence="16 19">Secreted</location>
        <location evidence="16 19">Extracellular space</location>
    </subcellularLocation>
</comment>
<comment type="subcellular location">
    <subcellularLocation>
        <location evidence="19">Parasitophorous vacuole</location>
    </subcellularLocation>
    <text evidence="19">(Microbial infection) In P.falciparum-infected red blood cells, VTN internalization is detected at the early trophozoite stage (PubMed:29567995). Colocalizes with SERA5 at the schizont stage and with SERA5 P47 at the merozoite surface (PubMed:29567995).</text>
</comment>
<comment type="tissue specificity">
    <text evidence="16 18 19">Expressed in the retina pigment epithelium (at protein level) (PubMed:25136834). Expressed in plasma (at protein level) (PubMed:2448300). Expressed in serum (at protein level) (PubMed:29567995).</text>
</comment>
<comment type="domain">
    <text>The SMB domain mediates interaction with SERPINE1/PAI1. The heparin-binding domain mediates interaction with insulin.</text>
</comment>
<comment type="PTM">
    <text evidence="13 17 18">Sulfated on tyrosine residues.</text>
</comment>
<comment type="PTM">
    <text evidence="1">N- and O-glycosylated.</text>
</comment>
<comment type="PTM">
    <text evidence="23">Phosphorylation on Thr-69 and Thr-76 favors cell adhesion and spreading.</text>
</comment>
<comment type="PTM">
    <text>It has been suggested that the active SMB domain may be permitted considerable disulfide bond heterogeneity or variability, thus two alternate disulfide patterns based on 3D structures are described with 1 disulfide bond conserved in both.</text>
</comment>
<comment type="PTM">
    <text>Phosphorylation sites are present in the extracellular medium.</text>
</comment>
<protein>
    <recommendedName>
        <fullName>Vitronectin</fullName>
        <shortName>VN</shortName>
    </recommendedName>
    <alternativeName>
        <fullName>S-protein</fullName>
    </alternativeName>
    <alternativeName>
        <fullName>Serum-spreading factor</fullName>
    </alternativeName>
    <alternativeName>
        <fullName>V75</fullName>
    </alternativeName>
    <component>
        <recommendedName>
            <fullName>Vitronectin V65 subunit</fullName>
        </recommendedName>
    </component>
    <component>
        <recommendedName>
            <fullName>Vitronectin V10 subunit</fullName>
        </recommendedName>
    </component>
    <component>
        <recommendedName>
            <fullName>Somatomedin-B</fullName>
        </recommendedName>
    </component>
</protein>
<proteinExistence type="evidence at protein level"/>
<gene>
    <name type="primary">VTN</name>
</gene>
<organism>
    <name type="scientific">Homo sapiens</name>
    <name type="common">Human</name>
    <dbReference type="NCBI Taxonomy" id="9606"/>
    <lineage>
        <taxon>Eukaryota</taxon>
        <taxon>Metazoa</taxon>
        <taxon>Chordata</taxon>
        <taxon>Craniata</taxon>
        <taxon>Vertebrata</taxon>
        <taxon>Euteleostomi</taxon>
        <taxon>Mammalia</taxon>
        <taxon>Eutheria</taxon>
        <taxon>Euarchontoglires</taxon>
        <taxon>Primates</taxon>
        <taxon>Haplorrhini</taxon>
        <taxon>Catarrhini</taxon>
        <taxon>Hominidae</taxon>
        <taxon>Homo</taxon>
    </lineage>
</organism>
<reference key="1">
    <citation type="journal article" date="1985" name="EMBO J.">
        <title>Complete amino acid sequence of human vitronectin deduced from cDNA. Similarity of cell attachment sites in vitronectin and fibronectin.</title>
        <authorList>
            <person name="Suzuki S."/>
            <person name="Oldberg A."/>
            <person name="Hayman E.G."/>
            <person name="Pierschbacher M.D."/>
            <person name="Ruoslahti E."/>
        </authorList>
    </citation>
    <scope>NUCLEOTIDE SEQUENCE [MRNA]</scope>
</reference>
<reference key="2">
    <citation type="submission" date="1986-06" db="PIR data bank">
        <authorList>
            <person name="Suzuki S."/>
            <person name="Oldberg A."/>
            <person name="Hayman E.G."/>
            <person name="Pierschbacher M.D."/>
            <person name="Ruoslahti E."/>
        </authorList>
    </citation>
    <scope>SEQUENCE REVISION</scope>
</reference>
<reference key="3">
    <citation type="journal article" date="1985" name="EMBO J.">
        <title>Molecular cloning of S-protein, a link between complement, coagulation and cell-substrate adhesion.</title>
        <authorList>
            <person name="Jenne D.E."/>
            <person name="Stanley K.K."/>
        </authorList>
    </citation>
    <scope>NUCLEOTIDE SEQUENCE [MRNA]</scope>
</reference>
<reference key="4">
    <citation type="journal article" date="1987" name="Biochemistry">
        <title>Nucleotide sequence and organization of the human S-protein gene: repeating peptide motifs in the 'pexin' family and a model for their evolution.</title>
        <authorList>
            <person name="Jenne D.E."/>
            <person name="Stanley K.K."/>
        </authorList>
    </citation>
    <scope>NUCLEOTIDE SEQUENCE [GENOMIC DNA]</scope>
</reference>
<reference key="5">
    <citation type="journal article" date="2004" name="Nat. Genet.">
        <title>Complete sequencing and characterization of 21,243 full-length human cDNAs.</title>
        <authorList>
            <person name="Ota T."/>
            <person name="Suzuki Y."/>
            <person name="Nishikawa T."/>
            <person name="Otsuki T."/>
            <person name="Sugiyama T."/>
            <person name="Irie R."/>
            <person name="Wakamatsu A."/>
            <person name="Hayashi K."/>
            <person name="Sato H."/>
            <person name="Nagai K."/>
            <person name="Kimura K."/>
            <person name="Makita H."/>
            <person name="Sekine M."/>
            <person name="Obayashi M."/>
            <person name="Nishi T."/>
            <person name="Shibahara T."/>
            <person name="Tanaka T."/>
            <person name="Ishii S."/>
            <person name="Yamamoto J."/>
            <person name="Saito K."/>
            <person name="Kawai Y."/>
            <person name="Isono Y."/>
            <person name="Nakamura Y."/>
            <person name="Nagahari K."/>
            <person name="Murakami K."/>
            <person name="Yasuda T."/>
            <person name="Iwayanagi T."/>
            <person name="Wagatsuma M."/>
            <person name="Shiratori A."/>
            <person name="Sudo H."/>
            <person name="Hosoiri T."/>
            <person name="Kaku Y."/>
            <person name="Kodaira H."/>
            <person name="Kondo H."/>
            <person name="Sugawara M."/>
            <person name="Takahashi M."/>
            <person name="Kanda K."/>
            <person name="Yokoi T."/>
            <person name="Furuya T."/>
            <person name="Kikkawa E."/>
            <person name="Omura Y."/>
            <person name="Abe K."/>
            <person name="Kamihara K."/>
            <person name="Katsuta N."/>
            <person name="Sato K."/>
            <person name="Tanikawa M."/>
            <person name="Yamazaki M."/>
            <person name="Ninomiya K."/>
            <person name="Ishibashi T."/>
            <person name="Yamashita H."/>
            <person name="Murakawa K."/>
            <person name="Fujimori K."/>
            <person name="Tanai H."/>
            <person name="Kimata M."/>
            <person name="Watanabe M."/>
            <person name="Hiraoka S."/>
            <person name="Chiba Y."/>
            <person name="Ishida S."/>
            <person name="Ono Y."/>
            <person name="Takiguchi S."/>
            <person name="Watanabe S."/>
            <person name="Yosida M."/>
            <person name="Hotuta T."/>
            <person name="Kusano J."/>
            <person name="Kanehori K."/>
            <person name="Takahashi-Fujii A."/>
            <person name="Hara H."/>
            <person name="Tanase T.-O."/>
            <person name="Nomura Y."/>
            <person name="Togiya S."/>
            <person name="Komai F."/>
            <person name="Hara R."/>
            <person name="Takeuchi K."/>
            <person name="Arita M."/>
            <person name="Imose N."/>
            <person name="Musashino K."/>
            <person name="Yuuki H."/>
            <person name="Oshima A."/>
            <person name="Sasaki N."/>
            <person name="Aotsuka S."/>
            <person name="Yoshikawa Y."/>
            <person name="Matsunawa H."/>
            <person name="Ichihara T."/>
            <person name="Shiohata N."/>
            <person name="Sano S."/>
            <person name="Moriya S."/>
            <person name="Momiyama H."/>
            <person name="Satoh N."/>
            <person name="Takami S."/>
            <person name="Terashima Y."/>
            <person name="Suzuki O."/>
            <person name="Nakagawa S."/>
            <person name="Senoh A."/>
            <person name="Mizoguchi H."/>
            <person name="Goto Y."/>
            <person name="Shimizu F."/>
            <person name="Wakebe H."/>
            <person name="Hishigaki H."/>
            <person name="Watanabe T."/>
            <person name="Sugiyama A."/>
            <person name="Takemoto M."/>
            <person name="Kawakami B."/>
            <person name="Yamazaki M."/>
            <person name="Watanabe K."/>
            <person name="Kumagai A."/>
            <person name="Itakura S."/>
            <person name="Fukuzumi Y."/>
            <person name="Fujimori Y."/>
            <person name="Komiyama M."/>
            <person name="Tashiro H."/>
            <person name="Tanigami A."/>
            <person name="Fujiwara T."/>
            <person name="Ono T."/>
            <person name="Yamada K."/>
            <person name="Fujii Y."/>
            <person name="Ozaki K."/>
            <person name="Hirao M."/>
            <person name="Ohmori Y."/>
            <person name="Kawabata A."/>
            <person name="Hikiji T."/>
            <person name="Kobatake N."/>
            <person name="Inagaki H."/>
            <person name="Ikema Y."/>
            <person name="Okamoto S."/>
            <person name="Okitani R."/>
            <person name="Kawakami T."/>
            <person name="Noguchi S."/>
            <person name="Itoh T."/>
            <person name="Shigeta K."/>
            <person name="Senba T."/>
            <person name="Matsumura K."/>
            <person name="Nakajima Y."/>
            <person name="Mizuno T."/>
            <person name="Morinaga M."/>
            <person name="Sasaki M."/>
            <person name="Togashi T."/>
            <person name="Oyama M."/>
            <person name="Hata H."/>
            <person name="Watanabe M."/>
            <person name="Komatsu T."/>
            <person name="Mizushima-Sugano J."/>
            <person name="Satoh T."/>
            <person name="Shirai Y."/>
            <person name="Takahashi Y."/>
            <person name="Nakagawa K."/>
            <person name="Okumura K."/>
            <person name="Nagase T."/>
            <person name="Nomura N."/>
            <person name="Kikuchi H."/>
            <person name="Masuho Y."/>
            <person name="Yamashita R."/>
            <person name="Nakai K."/>
            <person name="Yada T."/>
            <person name="Nakamura Y."/>
            <person name="Ohara O."/>
            <person name="Isogai T."/>
            <person name="Sugano S."/>
        </authorList>
    </citation>
    <scope>NUCLEOTIDE SEQUENCE [LARGE SCALE MRNA]</scope>
    <source>
        <tissue>Mammary gland</tissue>
    </source>
</reference>
<reference key="6">
    <citation type="submission" date="2001-05" db="EMBL/GenBank/DDBJ databases">
        <authorList>
            <consortium name="SeattleSNPs variation discovery resource"/>
        </authorList>
    </citation>
    <scope>NUCLEOTIDE SEQUENCE [GENOMIC DNA]</scope>
    <scope>VARIANTS SER-122; GLN-268 AND MET-400</scope>
</reference>
<reference key="7">
    <citation type="journal article" date="2004" name="Genome Res.">
        <title>The status, quality, and expansion of the NIH full-length cDNA project: the Mammalian Gene Collection (MGC).</title>
        <authorList>
            <consortium name="The MGC Project Team"/>
        </authorList>
    </citation>
    <scope>NUCLEOTIDE SEQUENCE [LARGE SCALE MRNA]</scope>
    <scope>VARIANT MET-400</scope>
    <source>
        <tissue>Lung</tissue>
    </source>
</reference>
<reference key="8">
    <citation type="journal article" date="1978" name="FEBS Lett.">
        <title>Primary structure of somatomedin B: a growth hormone-dependent serum factor with protease inhibiting activity.</title>
        <authorList>
            <person name="Fryklund L."/>
            <person name="Sievertsson H."/>
        </authorList>
    </citation>
    <scope>PROTEIN SEQUENCE OF 20-63</scope>
</reference>
<reference key="9">
    <citation type="journal article" date="1994" name="Biochim. Biophys. Acta">
        <title>Identification of a PAI-1 binding site in vitronectin.</title>
        <authorList>
            <person name="Sigurdardottir O."/>
            <person name="Wiman B."/>
        </authorList>
    </citation>
    <scope>PROTEIN SEQUENCE OF 20-44</scope>
    <scope>INTERACTION WITH SERPINE1/PAI1</scope>
</reference>
<reference key="10">
    <citation type="journal article" date="1991" name="Exp. Cell Res.">
        <title>Insulin binds to type V collagen with retention of mitogenic activity.</title>
        <authorList>
            <person name="Yaoi Y."/>
            <person name="Hashimoto K."/>
            <person name="Takahara K."/>
            <person name="Kato I."/>
        </authorList>
    </citation>
    <scope>PROTEIN SEQUENCE OF 360-368</scope>
    <scope>INTERACTION WITH INSULIN</scope>
</reference>
<reference key="11">
    <citation type="journal article" date="1988" name="J. Biol. Chem.">
        <title>Phosphorylation of vitronectin by a protein kinase in human plasma. Identification of a unique phosphorylation site in the heparin-binding domain.</title>
        <authorList>
            <person name="McGuire E.A."/>
            <person name="Peacock M.E."/>
            <person name="Inhorn R.C."/>
            <person name="Siegel N.R."/>
            <person name="Tollefsen D.M."/>
        </authorList>
    </citation>
    <scope>PROTEIN SEQUENCE OF 393-400</scope>
    <scope>SUBCELLULAR LOCATION</scope>
    <scope>TISSUE SPECIFICITY</scope>
    <scope>PHOSPHORYLATION AT SER-397</scope>
</reference>
<reference key="12">
    <citation type="submission" date="1992-06" db="UniProtKB">
        <authorList>
            <person name="Hochstrasser D.F."/>
            <person name="Frutiger S."/>
            <person name="Paquet N."/>
            <person name="Bairoch A."/>
            <person name="Ravier F."/>
            <person name="Pasquali C."/>
            <person name="Sanchez J.-C."/>
            <person name="Tissot J.-D."/>
            <person name="Bjellqvist B."/>
            <person name="Vargas R."/>
            <person name="Appel R.D."/>
            <person name="Hughes G.J."/>
        </authorList>
    </citation>
    <scope>PROTEIN SEQUENCE OF 399-413</scope>
    <source>
        <tissue>Plasma</tissue>
    </source>
</reference>
<reference key="13">
    <citation type="journal article" date="1989" name="Eur. J. Biochem.">
        <title>Sulfation of two tyrosine-residues in human complement S-protein (vitronectin).</title>
        <authorList>
            <person name="Jenne D.E."/>
            <person name="Hille A."/>
            <person name="Stanley K.K."/>
            <person name="Huttner W.B."/>
        </authorList>
    </citation>
    <scope>SULFATION</scope>
</reference>
<reference key="14">
    <citation type="journal article" date="1990" name="FEBS Lett.">
        <title>The phosphorylation of the two-chain form of vitronectin by protein kinase A is heparin dependent.</title>
        <authorList>
            <person name="Chain D."/>
            <person name="Korc-Grodzicki B."/>
            <person name="Kreizman T."/>
            <person name="Shaltiel S."/>
        </authorList>
    </citation>
    <scope>PHOSPHORYLATION AT SER-397</scope>
</reference>
<reference key="15">
    <citation type="journal article" date="1991" name="J. Biol. Chem.">
        <title>Evidence that type 1 plasminogen activator inhibitor binds to the somatomedin B domain of vitronectin.</title>
        <authorList>
            <person name="Seiffert D."/>
            <person name="Loskutoff D.J."/>
        </authorList>
    </citation>
    <scope>INTERACTION WITH SERPINE1/PAI1</scope>
</reference>
<reference key="16">
    <citation type="journal article" date="1996" name="J. Biol. Chem.">
        <title>The binding protein for globular heads of complement C1q, gC1qR. Functional expression and characterization as a novel vitronectin binding factor.</title>
        <authorList>
            <person name="Lim B.L."/>
            <person name="Reid K.B."/>
            <person name="Ghebrehiwet B."/>
            <person name="Peerschke E.I."/>
            <person name="Leigh L.A."/>
            <person name="Preissner K.T."/>
        </authorList>
    </citation>
    <scope>INTERACTION WITH C1QBP</scope>
</reference>
<reference key="17">
    <citation type="journal article" date="1998" name="J. Biol. Chem.">
        <title>Phosphorylation of vitronectin by casein kinase II. Identification of the sites and their promotion of cell adhesion and spreading.</title>
        <authorList>
            <person name="Seger D."/>
            <person name="Gechtman Z."/>
            <person name="Shaltiel S."/>
        </authorList>
    </citation>
    <scope>PHOSPHORYLATION AT THR-69 AND THR-76</scope>
    <scope>MUTAGENESIS OF THR-69 AND THR-76</scope>
</reference>
<reference key="18">
    <citation type="journal article" date="2002" name="J. Biol. Chem.">
        <title>Identification of the disulfide bonds in the recombinant somatomedin B domain of human vitronectin.</title>
        <authorList>
            <person name="Kamikubo Y."/>
            <person name="Okumura Y."/>
            <person name="Loskutoff D.J."/>
        </authorList>
    </citation>
    <scope>DISULFIDE BONDS IN SOMATOMEDIN-B</scope>
</reference>
<reference key="19">
    <citation type="journal article" date="2004" name="Proteomics">
        <title>Screening for N-glycosylated proteins by liquid chromatography mass spectrometry.</title>
        <authorList>
            <person name="Bunkenborg J."/>
            <person name="Pilch B.J."/>
            <person name="Podtelejnikov A.V."/>
            <person name="Wisniewski J.R."/>
        </authorList>
    </citation>
    <scope>GLYCOSYLATION [LARGE SCALE ANALYSIS] AT ASN-86; ASN-169 AND ASN-242</scope>
    <source>
        <tissue>Plasma</tissue>
    </source>
</reference>
<reference key="20">
    <citation type="journal article" date="2005" name="J. Proteome Res.">
        <title>Human plasma N-glycoproteome analysis by immunoaffinity subtraction, hydrazide chemistry, and mass spectrometry.</title>
        <authorList>
            <person name="Liu T."/>
            <person name="Qian W.-J."/>
            <person name="Gritsenko M.A."/>
            <person name="Camp D.G. II"/>
            <person name="Monroe M.E."/>
            <person name="Moore R.J."/>
            <person name="Smith R.D."/>
        </authorList>
    </citation>
    <scope>GLYCOSYLATION [LARGE SCALE ANALYSIS] AT ASN-86; ASN-169 AND ASN-242</scope>
    <source>
        <tissue>Plasma</tissue>
    </source>
</reference>
<reference key="21">
    <citation type="journal article" date="2006" name="Pituitary">
        <title>Phosphoproteomic analysis of the human pituitary.</title>
        <authorList>
            <person name="Beranova-Giorgianni S."/>
            <person name="Zhao Y."/>
            <person name="Desiderio D.M."/>
            <person name="Giorgianni F."/>
        </authorList>
    </citation>
    <scope>PHOSPHORYLATION [LARGE SCALE ANALYSIS] AT SER-312</scope>
    <scope>IDENTIFICATION BY MASS SPECTROMETRY [LARGE SCALE ANALYSIS]</scope>
    <source>
        <tissue>Pituitary</tissue>
    </source>
</reference>
<reference key="22">
    <citation type="journal article" date="2007" name="Nat. Methods">
        <title>Determination of the sites of tyrosine O-sulfation in peptides and proteins.</title>
        <authorList>
            <person name="Yu Y."/>
            <person name="Hoffhines A.J."/>
            <person name="Moore K.L."/>
            <person name="Leary J.A."/>
        </authorList>
    </citation>
    <scope>SULFATION AT TYR-75 AND TYR-78</scope>
    <scope>PHOSPHORYLATION AT SER-312</scope>
    <scope>GLYCOSYLATION AT ASN-86</scope>
    <scope>IDENTIFICATION BY MASS SPECTROMETRY</scope>
</reference>
<reference key="23">
    <citation type="journal article" date="2008" name="J. Proteome Res.">
        <title>Phosphoproteome of resting human platelets.</title>
        <authorList>
            <person name="Zahedi R.P."/>
            <person name="Lewandrowski U."/>
            <person name="Wiesner J."/>
            <person name="Wortelkamp S."/>
            <person name="Moebius J."/>
            <person name="Schuetz C."/>
            <person name="Walter U."/>
            <person name="Gambaryan S."/>
            <person name="Sickmann A."/>
        </authorList>
    </citation>
    <scope>PHOSPHORYLATION [LARGE SCALE ANALYSIS] AT SER-312</scope>
    <scope>IDENTIFICATION BY MASS SPECTROMETRY [LARGE SCALE ANALYSIS]</scope>
    <source>
        <tissue>Platelet</tissue>
    </source>
</reference>
<reference key="24">
    <citation type="journal article" date="2009" name="J. Proteome Res.">
        <title>Glycoproteomics analysis of human liver tissue by combination of multiple enzyme digestion and hydrazide chemistry.</title>
        <authorList>
            <person name="Chen R."/>
            <person name="Jiang X."/>
            <person name="Sun D."/>
            <person name="Han G."/>
            <person name="Wang F."/>
            <person name="Ye M."/>
            <person name="Wang L."/>
            <person name="Zou H."/>
        </authorList>
    </citation>
    <scope>GLYCOSYLATION [LARGE SCALE ANALYSIS] AT ASN-86; ASN-169 AND ASN-242</scope>
    <source>
        <tissue>Liver</tissue>
    </source>
</reference>
<reference key="25">
    <citation type="journal article" date="2009" name="Mol. Cell. Proteomics">
        <title>A strategy for precise and large scale identification of core fucosylated glycoproteins.</title>
        <authorList>
            <person name="Jia W."/>
            <person name="Lu Z."/>
            <person name="Fu Y."/>
            <person name="Wang H.P."/>
            <person name="Wang L.H."/>
            <person name="Chi H."/>
            <person name="Yuan Z.F."/>
            <person name="Zheng Z.B."/>
            <person name="Song L.N."/>
            <person name="Han H.H."/>
            <person name="Liang Y.M."/>
            <person name="Wang J.L."/>
            <person name="Cai Y."/>
            <person name="Zhang Y.K."/>
            <person name="Deng Y.L."/>
            <person name="Ying W.T."/>
            <person name="He S.M."/>
            <person name="Qian X.H."/>
        </authorList>
    </citation>
    <scope>GLYCOSYLATION AT ASN-86 AND ASN-242</scope>
</reference>
<reference key="26">
    <citation type="journal article" date="2011" name="BMC Syst. Biol.">
        <title>Initial characterization of the human central proteome.</title>
        <authorList>
            <person name="Burkard T.R."/>
            <person name="Planyavsky M."/>
            <person name="Kaupe I."/>
            <person name="Breitwieser F.P."/>
            <person name="Buerckstuemmer T."/>
            <person name="Bennett K.L."/>
            <person name="Superti-Furga G."/>
            <person name="Colinge J."/>
        </authorList>
    </citation>
    <scope>IDENTIFICATION BY MASS SPECTROMETRY [LARGE SCALE ANALYSIS]</scope>
</reference>
<reference key="27">
    <citation type="journal article" date="2014" name="J. Proteomics">
        <title>An enzyme assisted RP-RPLC approach for in-depth analysis of human liver phosphoproteome.</title>
        <authorList>
            <person name="Bian Y."/>
            <person name="Song C."/>
            <person name="Cheng K."/>
            <person name="Dong M."/>
            <person name="Wang F."/>
            <person name="Huang J."/>
            <person name="Sun D."/>
            <person name="Wang L."/>
            <person name="Ye M."/>
            <person name="Zou H."/>
        </authorList>
    </citation>
    <scope>PHOSPHORYLATION [LARGE SCALE ANALYSIS] AT SER-130; SER-137 AND SER-312</scope>
    <scope>IDENTIFICATION BY MASS SPECTROMETRY [LARGE SCALE ANALYSIS]</scope>
    <source>
        <tissue>Liver</tissue>
    </source>
</reference>
<reference key="28">
    <citation type="journal article" date="2014" name="PLoS ONE">
        <title>Complement factor H, vitronectin, and opticin are tyrosine-sulfated proteins of the retinal pigment epithelium.</title>
        <authorList>
            <person name="Kanan Y."/>
            <person name="Siefert J.C."/>
            <person name="Kinter M."/>
            <person name="Al-Ubaidi M.R."/>
        </authorList>
    </citation>
    <scope>TISSUE SPECIFICITY</scope>
    <scope>SULFATION</scope>
</reference>
<reference key="29">
    <citation type="journal article" date="2015" name="Proteomics">
        <title>N-terminome analysis of the human mitochondrial proteome.</title>
        <authorList>
            <person name="Vaca Jacome A.S."/>
            <person name="Rabilloud T."/>
            <person name="Schaeffer-Reiss C."/>
            <person name="Rompais M."/>
            <person name="Ayoub D."/>
            <person name="Lane L."/>
            <person name="Bairoch A."/>
            <person name="Van Dorsselaer A."/>
            <person name="Carapito C."/>
        </authorList>
    </citation>
    <scope>IDENTIFICATION BY MASS SPECTROMETRY [LARGE SCALE ANALYSIS]</scope>
</reference>
<reference key="30">
    <citation type="journal article" date="2018" name="Sci. Rep.">
        <title>Molecular Camouflage of Plasmodium falciparum Merozoites by Binding of Host Vitronectin to P47 Fragment of SERA5.</title>
        <authorList>
            <person name="Tougan T."/>
            <person name="Edula J.R."/>
            <person name="Takashima E."/>
            <person name="Morita M."/>
            <person name="Shinohara M."/>
            <person name="Shinohara A."/>
            <person name="Tsuboi T."/>
            <person name="Horii T."/>
        </authorList>
    </citation>
    <scope>INTERACTION WITH P.FALCIPARUM SERA5 (MICROBIAL INFECTION)</scope>
    <scope>SUBCELLULAR LOCATION (MICROBIAL INFECTION)</scope>
    <scope>TISSUE SPECIFICITY</scope>
</reference>
<reference key="31">
    <citation type="journal article" date="2003" name="Nat. Struct. Biol.">
        <title>How vitronectin binds PAI-1 to modulate fibrinolysis and cell migration.</title>
        <authorList>
            <person name="Zhou A."/>
            <person name="Huntington J.A."/>
            <person name="Pannu N.S."/>
            <person name="Carrell R.W."/>
            <person name="Read R.J."/>
        </authorList>
    </citation>
    <scope>X-RAY CRYSTALLOGRAPHY (2.28 ANGSTROMS) OF 22-58 IN COMPLEX WITH SERPINE1/PAI1</scope>
</reference>
<keyword id="KW-0002">3D-structure</keyword>
<keyword id="KW-0130">Cell adhesion</keyword>
<keyword id="KW-0903">Direct protein sequencing</keyword>
<keyword id="KW-1015">Disulfide bond</keyword>
<keyword id="KW-0325">Glycoprotein</keyword>
<keyword id="KW-0358">Heparin-binding</keyword>
<keyword id="KW-0597">Phosphoprotein</keyword>
<keyword id="KW-1267">Proteomics identification</keyword>
<keyword id="KW-1185">Reference proteome</keyword>
<keyword id="KW-0677">Repeat</keyword>
<keyword id="KW-0964">Secreted</keyword>
<keyword id="KW-0732">Signal</keyword>
<keyword id="KW-0765">Sulfation</keyword>
<name>VTNC_HUMAN</name>
<dbReference type="EMBL" id="X03168">
    <property type="protein sequence ID" value="CAA26933.1"/>
    <property type="status" value="ALT_SEQ"/>
    <property type="molecule type" value="mRNA"/>
</dbReference>
<dbReference type="EMBL" id="X05006">
    <property type="protein sequence ID" value="CAA28659.1"/>
    <property type="status" value="ALT_SEQ"/>
    <property type="molecule type" value="Genomic_DNA"/>
</dbReference>
<dbReference type="EMBL" id="AK312968">
    <property type="protein sequence ID" value="BAG35807.1"/>
    <property type="molecule type" value="mRNA"/>
</dbReference>
<dbReference type="EMBL" id="AF382388">
    <property type="protein sequence ID" value="AAK60270.1"/>
    <property type="molecule type" value="Genomic_DNA"/>
</dbReference>
<dbReference type="EMBL" id="BC005046">
    <property type="protein sequence ID" value="AAH05046.1"/>
    <property type="molecule type" value="mRNA"/>
</dbReference>
<dbReference type="CCDS" id="CCDS11229.1"/>
<dbReference type="PIR" id="A29744">
    <property type="entry name" value="SGHU1V"/>
</dbReference>
<dbReference type="RefSeq" id="NP_000629.3">
    <property type="nucleotide sequence ID" value="NM_000638.3"/>
</dbReference>
<dbReference type="PDB" id="1OC0">
    <property type="method" value="X-ray"/>
    <property type="resolution" value="2.28 A"/>
    <property type="chains" value="B=20-70"/>
</dbReference>
<dbReference type="PDB" id="1S4G">
    <property type="method" value="NMR"/>
    <property type="chains" value="A=20-70"/>
</dbReference>
<dbReference type="PDB" id="1SSU">
    <property type="method" value="NMR"/>
    <property type="chains" value="A=20-70"/>
</dbReference>
<dbReference type="PDB" id="2JQ8">
    <property type="method" value="NMR"/>
    <property type="chains" value="A=20-66"/>
</dbReference>
<dbReference type="PDB" id="3BT1">
    <property type="method" value="X-ray"/>
    <property type="resolution" value="2.80 A"/>
    <property type="chains" value="B=21-60"/>
</dbReference>
<dbReference type="PDB" id="3BT2">
    <property type="method" value="X-ray"/>
    <property type="resolution" value="2.50 A"/>
    <property type="chains" value="B=21-60"/>
</dbReference>
<dbReference type="PDB" id="4K24">
    <property type="method" value="X-ray"/>
    <property type="resolution" value="4.50 A"/>
    <property type="chains" value="B=21-60"/>
</dbReference>
<dbReference type="PDB" id="6O5E">
    <property type="method" value="X-ray"/>
    <property type="resolution" value="1.90 A"/>
    <property type="chains" value="A/B=154-474"/>
</dbReference>
<dbReference type="PDB" id="7RJ9">
    <property type="method" value="X-ray"/>
    <property type="resolution" value="1.70 A"/>
    <property type="chains" value="A/B=154-474"/>
</dbReference>
<dbReference type="PDBsum" id="1OC0"/>
<dbReference type="PDBsum" id="1S4G"/>
<dbReference type="PDBsum" id="1SSU"/>
<dbReference type="PDBsum" id="2JQ8"/>
<dbReference type="PDBsum" id="3BT1"/>
<dbReference type="PDBsum" id="3BT2"/>
<dbReference type="PDBsum" id="4K24"/>
<dbReference type="PDBsum" id="6O5E"/>
<dbReference type="PDBsum" id="7RJ9"/>
<dbReference type="BMRB" id="P04004"/>
<dbReference type="SMR" id="P04004"/>
<dbReference type="BioGRID" id="113287">
    <property type="interactions" value="188"/>
</dbReference>
<dbReference type="ComplexPortal" id="CPX-475">
    <property type="entry name" value="Vitronectin-PAI-1 complex"/>
</dbReference>
<dbReference type="ComplexPortal" id="CPX-501">
    <property type="entry name" value="uPA-uPAR-vitronectin complex"/>
</dbReference>
<dbReference type="CORUM" id="P04004"/>
<dbReference type="DIP" id="DIP-36566N"/>
<dbReference type="ELM" id="P04004"/>
<dbReference type="FunCoup" id="P04004">
    <property type="interactions" value="591"/>
</dbReference>
<dbReference type="IntAct" id="P04004">
    <property type="interactions" value="135"/>
</dbReference>
<dbReference type="MINT" id="P04004"/>
<dbReference type="STRING" id="9606.ENSP00000226218"/>
<dbReference type="ChEMBL" id="CHEMBL1075314"/>
<dbReference type="DrugBank" id="DB00054">
    <property type="generic name" value="Abciximab"/>
</dbReference>
<dbReference type="DrugBank" id="DB09130">
    <property type="generic name" value="Copper"/>
</dbReference>
<dbReference type="DrugBank" id="DB01593">
    <property type="generic name" value="Zinc"/>
</dbReference>
<dbReference type="DrugBank" id="DB14487">
    <property type="generic name" value="Zinc acetate"/>
</dbReference>
<dbReference type="DrugBank" id="DB14533">
    <property type="generic name" value="Zinc chloride"/>
</dbReference>
<dbReference type="DrugBank" id="DB14548">
    <property type="generic name" value="Zinc sulfate, unspecified form"/>
</dbReference>
<dbReference type="TCDB" id="8.B.14.2.5">
    <property type="family name" value="the sea anemone peptide toxin, class 1 (bgk) family"/>
</dbReference>
<dbReference type="GlyConnect" id="625">
    <property type="glycosylation" value="78 N-Linked glycans (3 sites)"/>
</dbReference>
<dbReference type="GlyCosmos" id="P04004">
    <property type="glycosylation" value="9 sites, 101 glycans"/>
</dbReference>
<dbReference type="GlyGen" id="P04004">
    <property type="glycosylation" value="16 sites, 164 N-linked glycans (4 sites), 5 O-linked glycans (13 sites)"/>
</dbReference>
<dbReference type="iPTMnet" id="P04004"/>
<dbReference type="PhosphoSitePlus" id="P04004"/>
<dbReference type="SwissPalm" id="P04004"/>
<dbReference type="BioMuta" id="VTN"/>
<dbReference type="DMDM" id="139653"/>
<dbReference type="CPTAC" id="CPTAC-690"/>
<dbReference type="jPOST" id="P04004"/>
<dbReference type="MassIVE" id="P04004"/>
<dbReference type="PaxDb" id="9606-ENSP00000226218"/>
<dbReference type="PeptideAtlas" id="P04004"/>
<dbReference type="PRIDE" id="P04004"/>
<dbReference type="ProteomicsDB" id="51633"/>
<dbReference type="Pumba" id="P04004"/>
<dbReference type="Antibodypedia" id="79506">
    <property type="antibodies" value="1047 antibodies from 44 providers"/>
</dbReference>
<dbReference type="DNASU" id="7448"/>
<dbReference type="Ensembl" id="ENST00000226218.9">
    <property type="protein sequence ID" value="ENSP00000226218.4"/>
    <property type="gene ID" value="ENSG00000109072.14"/>
</dbReference>
<dbReference type="GeneID" id="7448"/>
<dbReference type="KEGG" id="hsa:7448"/>
<dbReference type="MANE-Select" id="ENST00000226218.9">
    <property type="protein sequence ID" value="ENSP00000226218.4"/>
    <property type="RefSeq nucleotide sequence ID" value="NM_000638.4"/>
    <property type="RefSeq protein sequence ID" value="NP_000629.3"/>
</dbReference>
<dbReference type="UCSC" id="uc002hbc.4">
    <property type="organism name" value="human"/>
</dbReference>
<dbReference type="AGR" id="HGNC:12724"/>
<dbReference type="CTD" id="7448"/>
<dbReference type="DisGeNET" id="7448"/>
<dbReference type="GeneCards" id="VTN"/>
<dbReference type="GeneReviews" id="VTN"/>
<dbReference type="HGNC" id="HGNC:12724">
    <property type="gene designation" value="VTN"/>
</dbReference>
<dbReference type="HPA" id="ENSG00000109072">
    <property type="expression patterns" value="Tissue enriched (liver)"/>
</dbReference>
<dbReference type="MalaCards" id="VTN"/>
<dbReference type="MIM" id="193190">
    <property type="type" value="gene"/>
</dbReference>
<dbReference type="neXtProt" id="NX_P04004"/>
<dbReference type="OpenTargets" id="ENSG00000109072"/>
<dbReference type="PharmGKB" id="PA37335"/>
<dbReference type="VEuPathDB" id="HostDB:ENSG00000109072"/>
<dbReference type="eggNOG" id="KOG1565">
    <property type="taxonomic scope" value="Eukaryota"/>
</dbReference>
<dbReference type="GeneTree" id="ENSGT00530000063751"/>
<dbReference type="HOGENOM" id="CLU_046227_0_0_1"/>
<dbReference type="InParanoid" id="P04004"/>
<dbReference type="OMA" id="FEHFAMM"/>
<dbReference type="OrthoDB" id="9898692at2759"/>
<dbReference type="PAN-GO" id="P04004">
    <property type="GO annotations" value="5 GO annotations based on evolutionary models"/>
</dbReference>
<dbReference type="PhylomeDB" id="P04004"/>
<dbReference type="TreeFam" id="TF332780"/>
<dbReference type="PathwayCommons" id="P04004"/>
<dbReference type="Reactome" id="R-HSA-2129379">
    <property type="pathway name" value="Molecules associated with elastic fibres"/>
</dbReference>
<dbReference type="Reactome" id="R-HSA-216083">
    <property type="pathway name" value="Integrin cell surface interactions"/>
</dbReference>
<dbReference type="Reactome" id="R-HSA-3000170">
    <property type="pathway name" value="Syndecan interactions"/>
</dbReference>
<dbReference type="Reactome" id="R-HSA-3000178">
    <property type="pathway name" value="ECM proteoglycans"/>
</dbReference>
<dbReference type="Reactome" id="R-HSA-977606">
    <property type="pathway name" value="Regulation of Complement cascade"/>
</dbReference>
<dbReference type="SignaLink" id="P04004"/>
<dbReference type="SIGNOR" id="P04004"/>
<dbReference type="BioGRID-ORCS" id="7448">
    <property type="hits" value="20 hits in 1118 CRISPR screens"/>
</dbReference>
<dbReference type="ChiTaRS" id="VTN">
    <property type="organism name" value="human"/>
</dbReference>
<dbReference type="EvolutionaryTrace" id="P04004"/>
<dbReference type="GeneWiki" id="Vitronectin"/>
<dbReference type="GenomeRNAi" id="7448"/>
<dbReference type="Pharos" id="P04004">
    <property type="development level" value="Tbio"/>
</dbReference>
<dbReference type="PRO" id="PR:P04004"/>
<dbReference type="Proteomes" id="UP000005640">
    <property type="component" value="Chromosome 17"/>
</dbReference>
<dbReference type="RNAct" id="P04004">
    <property type="molecule type" value="protein"/>
</dbReference>
<dbReference type="Bgee" id="ENSG00000109072">
    <property type="expression patterns" value="Expressed in right lobe of liver and 93 other cell types or tissues"/>
</dbReference>
<dbReference type="ExpressionAtlas" id="P04004">
    <property type="expression patterns" value="baseline and differential"/>
</dbReference>
<dbReference type="GO" id="GO:0071062">
    <property type="term" value="C:alphav-beta3 integrin-vitronectin complex"/>
    <property type="evidence" value="ECO:0000304"/>
    <property type="project" value="BHF-UCL"/>
</dbReference>
<dbReference type="GO" id="GO:0005604">
    <property type="term" value="C:basement membrane"/>
    <property type="evidence" value="ECO:0007669"/>
    <property type="project" value="Ensembl"/>
</dbReference>
<dbReference type="GO" id="GO:0072562">
    <property type="term" value="C:blood microparticle"/>
    <property type="evidence" value="ECO:0007005"/>
    <property type="project" value="UniProtKB"/>
</dbReference>
<dbReference type="GO" id="GO:0062023">
    <property type="term" value="C:collagen-containing extracellular matrix"/>
    <property type="evidence" value="ECO:0000314"/>
    <property type="project" value="BHF-UCL"/>
</dbReference>
<dbReference type="GO" id="GO:0005783">
    <property type="term" value="C:endoplasmic reticulum"/>
    <property type="evidence" value="ECO:0000314"/>
    <property type="project" value="HPA"/>
</dbReference>
<dbReference type="GO" id="GO:0070062">
    <property type="term" value="C:extracellular exosome"/>
    <property type="evidence" value="ECO:0007005"/>
    <property type="project" value="UniProtKB"/>
</dbReference>
<dbReference type="GO" id="GO:0005576">
    <property type="term" value="C:extracellular region"/>
    <property type="evidence" value="ECO:0007005"/>
    <property type="project" value="BHF-UCL"/>
</dbReference>
<dbReference type="GO" id="GO:0005615">
    <property type="term" value="C:extracellular space"/>
    <property type="evidence" value="ECO:0000314"/>
    <property type="project" value="UniProtKB"/>
</dbReference>
<dbReference type="GO" id="GO:0005796">
    <property type="term" value="C:Golgi lumen"/>
    <property type="evidence" value="ECO:0007669"/>
    <property type="project" value="Ensembl"/>
</dbReference>
<dbReference type="GO" id="GO:0043231">
    <property type="term" value="C:intracellular membrane-bounded organelle"/>
    <property type="evidence" value="ECO:0000314"/>
    <property type="project" value="HPA"/>
</dbReference>
<dbReference type="GO" id="GO:1904090">
    <property type="term" value="C:peptidase inhibitor complex"/>
    <property type="evidence" value="ECO:0000353"/>
    <property type="project" value="ComplexPortal"/>
</dbReference>
<dbReference type="GO" id="GO:0098637">
    <property type="term" value="C:protein complex involved in cell-matrix adhesion"/>
    <property type="evidence" value="ECO:0000353"/>
    <property type="project" value="ComplexPortal"/>
</dbReference>
<dbReference type="GO" id="GO:0048237">
    <property type="term" value="C:rough endoplasmic reticulum lumen"/>
    <property type="evidence" value="ECO:0007669"/>
    <property type="project" value="Ensembl"/>
</dbReference>
<dbReference type="GO" id="GO:0005518">
    <property type="term" value="F:collagen binding"/>
    <property type="evidence" value="ECO:0007669"/>
    <property type="project" value="Ensembl"/>
</dbReference>
<dbReference type="GO" id="GO:0050840">
    <property type="term" value="F:extracellular matrix binding"/>
    <property type="evidence" value="ECO:0000318"/>
    <property type="project" value="GO_Central"/>
</dbReference>
<dbReference type="GO" id="GO:0005201">
    <property type="term" value="F:extracellular matrix structural constituent"/>
    <property type="evidence" value="ECO:0000250"/>
    <property type="project" value="BHF-UCL"/>
</dbReference>
<dbReference type="GO" id="GO:0008201">
    <property type="term" value="F:heparin binding"/>
    <property type="evidence" value="ECO:0007669"/>
    <property type="project" value="UniProtKB-KW"/>
</dbReference>
<dbReference type="GO" id="GO:0042802">
    <property type="term" value="F:identical protein binding"/>
    <property type="evidence" value="ECO:0007669"/>
    <property type="project" value="Ensembl"/>
</dbReference>
<dbReference type="GO" id="GO:0005178">
    <property type="term" value="F:integrin binding"/>
    <property type="evidence" value="ECO:0000314"/>
    <property type="project" value="UniProtKB"/>
</dbReference>
<dbReference type="GO" id="GO:0030247">
    <property type="term" value="F:polysaccharide binding"/>
    <property type="evidence" value="ECO:0007669"/>
    <property type="project" value="InterPro"/>
</dbReference>
<dbReference type="GO" id="GO:0005044">
    <property type="term" value="F:scavenger receptor activity"/>
    <property type="evidence" value="ECO:0007669"/>
    <property type="project" value="InterPro"/>
</dbReference>
<dbReference type="GO" id="GO:0007155">
    <property type="term" value="P:cell adhesion"/>
    <property type="evidence" value="ECO:0000304"/>
    <property type="project" value="ProtInc"/>
</dbReference>
<dbReference type="GO" id="GO:0033627">
    <property type="term" value="P:cell adhesion mediated by integrin"/>
    <property type="evidence" value="ECO:0000314"/>
    <property type="project" value="BHF-UCL"/>
</dbReference>
<dbReference type="GO" id="GO:0016477">
    <property type="term" value="P:cell migration"/>
    <property type="evidence" value="ECO:0000316"/>
    <property type="project" value="UniProtKB"/>
</dbReference>
<dbReference type="GO" id="GO:0007160">
    <property type="term" value="P:cell-matrix adhesion"/>
    <property type="evidence" value="ECO:0000314"/>
    <property type="project" value="BHF-UCL"/>
</dbReference>
<dbReference type="GO" id="GO:0035987">
    <property type="term" value="P:endodermal cell differentiation"/>
    <property type="evidence" value="ECO:0000314"/>
    <property type="project" value="UniProtKB"/>
</dbReference>
<dbReference type="GO" id="GO:0030198">
    <property type="term" value="P:extracellular matrix organization"/>
    <property type="evidence" value="ECO:0007669"/>
    <property type="project" value="Ensembl"/>
</dbReference>
<dbReference type="GO" id="GO:0006955">
    <property type="term" value="P:immune response"/>
    <property type="evidence" value="ECO:0000304"/>
    <property type="project" value="ProtInc"/>
</dbReference>
<dbReference type="GO" id="GO:0007229">
    <property type="term" value="P:integrin-mediated signaling pathway"/>
    <property type="evidence" value="ECO:0000315"/>
    <property type="project" value="BHF-UCL"/>
</dbReference>
<dbReference type="GO" id="GO:0097421">
    <property type="term" value="P:liver regeneration"/>
    <property type="evidence" value="ECO:0007669"/>
    <property type="project" value="Ensembl"/>
</dbReference>
<dbReference type="GO" id="GO:0030195">
    <property type="term" value="P:negative regulation of blood coagulation"/>
    <property type="evidence" value="ECO:0000314"/>
    <property type="project" value="BHF-UCL"/>
</dbReference>
<dbReference type="GO" id="GO:0051918">
    <property type="term" value="P:negative regulation of fibrinolysis"/>
    <property type="evidence" value="ECO:0000303"/>
    <property type="project" value="ComplexPortal"/>
</dbReference>
<dbReference type="GO" id="GO:0045861">
    <property type="term" value="P:negative regulation of proteolysis"/>
    <property type="evidence" value="ECO:0000314"/>
    <property type="project" value="BHF-UCL"/>
</dbReference>
<dbReference type="GO" id="GO:0048709">
    <property type="term" value="P:oligodendrocyte differentiation"/>
    <property type="evidence" value="ECO:0007669"/>
    <property type="project" value="Ensembl"/>
</dbReference>
<dbReference type="GO" id="GO:0010811">
    <property type="term" value="P:positive regulation of cell-substrate adhesion"/>
    <property type="evidence" value="ECO:0007669"/>
    <property type="project" value="Ensembl"/>
</dbReference>
<dbReference type="GO" id="GO:0048260">
    <property type="term" value="P:positive regulation of receptor-mediated endocytosis"/>
    <property type="evidence" value="ECO:0000314"/>
    <property type="project" value="BHF-UCL"/>
</dbReference>
<dbReference type="GO" id="GO:0014911">
    <property type="term" value="P:positive regulation of smooth muscle cell migration"/>
    <property type="evidence" value="ECO:0000314"/>
    <property type="project" value="BHF-UCL"/>
</dbReference>
<dbReference type="GO" id="GO:0030949">
    <property type="term" value="P:positive regulation of vascular endothelial growth factor receptor signaling pathway"/>
    <property type="evidence" value="ECO:0000304"/>
    <property type="project" value="BHF-UCL"/>
</dbReference>
<dbReference type="GO" id="GO:1900748">
    <property type="term" value="P:positive regulation of vascular endothelial growth factor signaling pathway"/>
    <property type="evidence" value="ECO:0000314"/>
    <property type="project" value="BHF-UCL"/>
</dbReference>
<dbReference type="GO" id="GO:0090303">
    <property type="term" value="P:positive regulation of wound healing"/>
    <property type="evidence" value="ECO:0000305"/>
    <property type="project" value="BHF-UCL"/>
</dbReference>
<dbReference type="GO" id="GO:0051258">
    <property type="term" value="P:protein polymerization"/>
    <property type="evidence" value="ECO:0007669"/>
    <property type="project" value="Ensembl"/>
</dbReference>
<dbReference type="GO" id="GO:0030155">
    <property type="term" value="P:regulation of cell adhesion"/>
    <property type="evidence" value="ECO:0000314"/>
    <property type="project" value="ComplexPortal"/>
</dbReference>
<dbReference type="GO" id="GO:0061302">
    <property type="term" value="P:smooth muscle cell-matrix adhesion"/>
    <property type="evidence" value="ECO:0000314"/>
    <property type="project" value="BHF-UCL"/>
</dbReference>
<dbReference type="CDD" id="cd00094">
    <property type="entry name" value="HX"/>
    <property type="match status" value="1"/>
</dbReference>
<dbReference type="DisProt" id="DP02913"/>
<dbReference type="FunFam" id="4.10.410.20:FF:000002">
    <property type="entry name" value="Ectonucleotide pyrophosphatase/phosphodiesterase family member 2"/>
    <property type="match status" value="1"/>
</dbReference>
<dbReference type="FunFam" id="2.110.10.10:FF:000025">
    <property type="entry name" value="Vitronectin"/>
    <property type="match status" value="1"/>
</dbReference>
<dbReference type="FunFam" id="2.110.10.10:FF:000010">
    <property type="entry name" value="vitronectin"/>
    <property type="match status" value="1"/>
</dbReference>
<dbReference type="Gene3D" id="4.10.410.20">
    <property type="match status" value="1"/>
</dbReference>
<dbReference type="Gene3D" id="2.110.10.10">
    <property type="entry name" value="Hemopexin-like domain"/>
    <property type="match status" value="2"/>
</dbReference>
<dbReference type="InterPro" id="IPR051298">
    <property type="entry name" value="Heme_transport/Cell_adhesion"/>
</dbReference>
<dbReference type="InterPro" id="IPR000585">
    <property type="entry name" value="Hemopexin-like_dom"/>
</dbReference>
<dbReference type="InterPro" id="IPR036375">
    <property type="entry name" value="Hemopexin-like_dom_sf"/>
</dbReference>
<dbReference type="InterPro" id="IPR018487">
    <property type="entry name" value="Hemopexin-like_repeat"/>
</dbReference>
<dbReference type="InterPro" id="IPR018486">
    <property type="entry name" value="Hemopexin_CS"/>
</dbReference>
<dbReference type="InterPro" id="IPR020436">
    <property type="entry name" value="SMB_chordata"/>
</dbReference>
<dbReference type="InterPro" id="IPR036024">
    <property type="entry name" value="Somatomedin_B-like_dom_sf"/>
</dbReference>
<dbReference type="InterPro" id="IPR001212">
    <property type="entry name" value="Somatomedin_B_dom"/>
</dbReference>
<dbReference type="PANTHER" id="PTHR22917">
    <property type="entry name" value="HEMOPEXIN DOMAIN-CONTAINING PROTEIN"/>
    <property type="match status" value="1"/>
</dbReference>
<dbReference type="PANTHER" id="PTHR22917:SF3">
    <property type="entry name" value="VITRONECTIN"/>
    <property type="match status" value="1"/>
</dbReference>
<dbReference type="Pfam" id="PF00045">
    <property type="entry name" value="Hemopexin"/>
    <property type="match status" value="4"/>
</dbReference>
<dbReference type="Pfam" id="PF01033">
    <property type="entry name" value="Somatomedin_B"/>
    <property type="match status" value="1"/>
</dbReference>
<dbReference type="PRINTS" id="PR00022">
    <property type="entry name" value="SOMATOMEDINB"/>
</dbReference>
<dbReference type="SMART" id="SM00120">
    <property type="entry name" value="HX"/>
    <property type="match status" value="4"/>
</dbReference>
<dbReference type="SMART" id="SM00201">
    <property type="entry name" value="SO"/>
    <property type="match status" value="1"/>
</dbReference>
<dbReference type="SUPFAM" id="SSF50923">
    <property type="entry name" value="Hemopexin-like domain"/>
    <property type="match status" value="1"/>
</dbReference>
<dbReference type="SUPFAM" id="SSF90188">
    <property type="entry name" value="Somatomedin B domain"/>
    <property type="match status" value="1"/>
</dbReference>
<dbReference type="PROSITE" id="PS00024">
    <property type="entry name" value="HEMOPEXIN"/>
    <property type="match status" value="2"/>
</dbReference>
<dbReference type="PROSITE" id="PS51642">
    <property type="entry name" value="HEMOPEXIN_2"/>
    <property type="match status" value="4"/>
</dbReference>
<dbReference type="PROSITE" id="PS00524">
    <property type="entry name" value="SMB_1"/>
    <property type="match status" value="1"/>
</dbReference>
<dbReference type="PROSITE" id="PS50958">
    <property type="entry name" value="SMB_2"/>
    <property type="match status" value="1"/>
</dbReference>